<organism>
    <name type="scientific">Tibrogargan virus (strain CS132)</name>
    <name type="common">TIBV</name>
    <dbReference type="NCBI Taxonomy" id="1559361"/>
    <lineage>
        <taxon>Viruses</taxon>
        <taxon>Riboviria</taxon>
        <taxon>Orthornavirae</taxon>
        <taxon>Negarnaviricota</taxon>
        <taxon>Haploviricotina</taxon>
        <taxon>Monjiviricetes</taxon>
        <taxon>Mononegavirales</taxon>
        <taxon>Rhabdoviridae</taxon>
        <taxon>Alpharhabdovirinae</taxon>
        <taxon>Tibrovirus</taxon>
        <taxon>Tibrovirus tibrogargan</taxon>
    </lineage>
</organism>
<protein>
    <recommendedName>
        <fullName>Uncharacterized protein U4</fullName>
    </recommendedName>
</protein>
<keyword id="KW-0024">Alternative initiation</keyword>
<keyword id="KW-1185">Reference proteome</keyword>
<name>U4_TIBVC</name>
<comment type="alternative products">
    <event type="alternative initiation"/>
    <isoform>
        <id>D8V076-1</id>
        <name>Uncharacterized protein U4</name>
        <sequence type="displayed"/>
    </isoform>
    <isoform>
        <id>D8V075-1</id>
        <name>Glycoprotein</name>
        <sequence type="external"/>
    </isoform>
</comment>
<organismHost>
    <name type="scientific">Bos taurus</name>
    <name type="common">Bovine</name>
    <dbReference type="NCBI Taxonomy" id="9913"/>
</organismHost>
<organismHost>
    <name type="scientific">Culicoides brevitarsis</name>
    <dbReference type="NCBI Taxonomy" id="469753"/>
</organismHost>
<reference key="1">
    <citation type="journal article" date="2011" name="J. Gen. Virol.">
        <title>Tibrogargan and Coastal Plains rhabdoviruses: genomic characterization, evolution of novel genes and seroprevalence in Australian livestock.</title>
        <authorList>
            <person name="Gubala A."/>
            <person name="Davis S."/>
            <person name="Weir R."/>
            <person name="Melville L."/>
            <person name="Cowled C."/>
            <person name="Boyle D."/>
        </authorList>
    </citation>
    <scope>NUCLEOTIDE SEQUENCE [GENOMIC RNA]</scope>
    <source>
        <strain>CS132</strain>
    </source>
</reference>
<feature type="chain" id="PRO_0000432059" description="Uncharacterized protein U4">
    <location>
        <begin position="1"/>
        <end position="55"/>
    </location>
</feature>
<sequence length="55" mass="6616">MITRKHIIKEIHLTTIMMICMRQLRMEELFTRHSMFSSIFNYSKTLDGLFSIHSP</sequence>
<proteinExistence type="predicted"/>
<dbReference type="EMBL" id="GQ294472">
    <property type="protein sequence ID" value="ADG86353.1"/>
    <property type="molecule type" value="Viral_cRNA"/>
</dbReference>
<dbReference type="Proteomes" id="UP000029770">
    <property type="component" value="Segment"/>
</dbReference>
<gene>
    <name type="primary">U4</name>
</gene>
<accession>D8V076</accession>